<protein>
    <recommendedName>
        <fullName evidence="7">ATP synthase F(0) complex subunit k, mitochondrial</fullName>
    </recommendedName>
    <alternativeName>
        <fullName evidence="7">ATP synthase membrane subunit DAPIT, mitochondrial</fullName>
    </alternativeName>
    <alternativeName>
        <fullName>Diabetes-associated protein in insulin-sensitive tissues</fullName>
    </alternativeName>
    <alternativeName>
        <fullName evidence="7">Up-regulated during skeletal muscle growth protein 5</fullName>
    </alternativeName>
</protein>
<accession>Q9JJW3</accession>
<name>ATPMK_RAT</name>
<feature type="chain" id="PRO_0000231580" description="ATP synthase F(0) complex subunit k, mitochondrial">
    <location>
        <begin position="1"/>
        <end position="58"/>
    </location>
</feature>
<feature type="transmembrane region" description="Helical" evidence="5">
    <location>
        <begin position="23"/>
        <end position="45"/>
    </location>
</feature>
<feature type="modified residue" description="N6-acetyllysine" evidence="3">
    <location>
        <position position="16"/>
    </location>
</feature>
<feature type="modified residue" description="N6-acetyllysine" evidence="3">
    <location>
        <position position="17"/>
    </location>
</feature>
<organism>
    <name type="scientific">Rattus norvegicus</name>
    <name type="common">Rat</name>
    <dbReference type="NCBI Taxonomy" id="10116"/>
    <lineage>
        <taxon>Eukaryota</taxon>
        <taxon>Metazoa</taxon>
        <taxon>Chordata</taxon>
        <taxon>Craniata</taxon>
        <taxon>Vertebrata</taxon>
        <taxon>Euteleostomi</taxon>
        <taxon>Mammalia</taxon>
        <taxon>Eutheria</taxon>
        <taxon>Euarchontoglires</taxon>
        <taxon>Glires</taxon>
        <taxon>Rodentia</taxon>
        <taxon>Myomorpha</taxon>
        <taxon>Muroidea</taxon>
        <taxon>Muridae</taxon>
        <taxon>Murinae</taxon>
        <taxon>Rattus</taxon>
    </lineage>
</organism>
<comment type="function">
    <text evidence="1 2 4">Subunit k, of the mitochondrial membrane ATP synthase complex (F(1)F(0) ATP synthase or Complex V) that produces ATP from ADP in the presence of a proton gradient across the membrane which is generated by electron transport complexes of the respiratory chain (By similarity). ATP synthase complex consist of a soluble F(1) head domain - the catalytic core - and a membrane F(1) domain - the membrane proton channel. These two domains are linked by a central stalk rotating inside the F(1) region and a stationary peripheral stalk (By similarity). During catalysis, ATP synthesis in the catalytic domain of F(1) is coupled via a rotary mechanism of the central stalk subunits to proton translocation (By similarity). In vivo, can only synthesize ATP although its ATP hydrolase activity can be activated artificially in vitro (By similarity). Part of the complex F(0) domain (By similarity). Required for dimerization of the ATP synthase complex and as such regulates ATP synthesis in the mitochondria (By similarity).</text>
</comment>
<comment type="subunit">
    <text evidence="2 4">Component of the ATP synthase complex composed at least of ATP5F1A/subunit alpha, ATP5F1B/subunit beta, ATP5MC1/subunit c (homooctomer), MT-ATP6/subunit a, MT-ATP8/subunit 8, ATP5ME/subunit e, ATP5MF/subunit f, ATP5MG/subunit g, ATP5MK/subunit k, ATP5MJ/subunit j, ATP5F1C/subunit gamma, ATP5F1D/subunit delta, ATP5F1E/subunit epsilon, ATP5PF/subunit F6, ATP5PB/subunit b, ATP5PD/subunit d, ATP5PO/subunit OSCP. ATP synthase complex consists of a soluble F(1) head domain (subunits alpha(3) and beta(3)) - the catalytic core - and a membrane F(0) domain - the membrane proton channel (subunits c, a, 8, e, f, g, k and j). These two domains are linked by a central stalk (subunits gamma, delta, and epsilon) rotating inside the F1 region and a stationary peripheral stalk (subunits F6, b, d, and OSCP) (By similarity). The ATP synthase complex/complex V exists as a monomeric and a dimeric supercomplex that helps shape mitochondrial cristae to optimize proton flow (By similarity).</text>
</comment>
<comment type="subcellular location">
    <subcellularLocation>
        <location evidence="4">Mitochondrion membrane</location>
        <topology evidence="5">Single-pass membrane protein</topology>
    </subcellularLocation>
</comment>
<comment type="tissue specificity">
    <text evidence="6">Ubiquitous. Highly expressed in skeletal and cardiac muscle. Moderately expressed in brain, thymus, stomach and testis. Lowest expression levels were detected in lung, liver, kidney, adrenal gland, spleen, small intestine and adipose tissue. In streptozotocin-induced diabetes, the insulin-sensitive tissues skeletal and cardiac muscle were down-regulated.</text>
</comment>
<gene>
    <name type="primary">Atp5mk</name>
    <name evidence="8" type="synonym">Atp5md</name>
    <name type="synonym">Dapit</name>
    <name type="synonym">Usmg5</name>
</gene>
<dbReference type="EMBL" id="AJ271158">
    <property type="protein sequence ID" value="CAB71156.1"/>
    <property type="molecule type" value="mRNA"/>
</dbReference>
<dbReference type="RefSeq" id="NP_598228.1">
    <property type="nucleotide sequence ID" value="NM_133544.2"/>
</dbReference>
<dbReference type="RefSeq" id="XP_008766441.1">
    <property type="nucleotide sequence ID" value="XM_008768219.2"/>
</dbReference>
<dbReference type="RefSeq" id="XP_008773622.1">
    <property type="nucleotide sequence ID" value="XM_008775400.2"/>
</dbReference>
<dbReference type="RefSeq" id="XP_063129954.1">
    <property type="nucleotide sequence ID" value="XM_063273884.1"/>
</dbReference>
<dbReference type="SMR" id="Q9JJW3"/>
<dbReference type="BioGRID" id="251083">
    <property type="interactions" value="1"/>
</dbReference>
<dbReference type="FunCoup" id="Q9JJW3">
    <property type="interactions" value="939"/>
</dbReference>
<dbReference type="IntAct" id="Q9JJW3">
    <property type="interactions" value="1"/>
</dbReference>
<dbReference type="MINT" id="Q9JJW3"/>
<dbReference type="STRING" id="10116.ENSRNOP00000027496"/>
<dbReference type="iPTMnet" id="Q9JJW3"/>
<dbReference type="PhosphoSitePlus" id="Q9JJW3"/>
<dbReference type="SwissPalm" id="Q9JJW3"/>
<dbReference type="PaxDb" id="10116-ENSRNOP00000027496"/>
<dbReference type="Ensembl" id="ENSRNOT00000027496.6">
    <property type="protein sequence ID" value="ENSRNOP00000027496.2"/>
    <property type="gene ID" value="ENSRNOG00000020296.6"/>
</dbReference>
<dbReference type="Ensembl" id="ENSRNOT00000100748.1">
    <property type="protein sequence ID" value="ENSRNOP00000093868.1"/>
    <property type="gene ID" value="ENSRNOG00000067471.1"/>
</dbReference>
<dbReference type="GeneID" id="171069"/>
<dbReference type="KEGG" id="rno:171069"/>
<dbReference type="AGR" id="RGD:631426"/>
<dbReference type="CTD" id="84833"/>
<dbReference type="RGD" id="631426">
    <property type="gene designation" value="Atp5mk"/>
</dbReference>
<dbReference type="VEuPathDB" id="HostDB:ENSRNOG00000042869"/>
<dbReference type="eggNOG" id="ENOG502S82X">
    <property type="taxonomic scope" value="Eukaryota"/>
</dbReference>
<dbReference type="GeneTree" id="ENSGT00390000015489"/>
<dbReference type="HOGENOM" id="CLU_209345_1_0_1"/>
<dbReference type="InParanoid" id="Q9JJW3"/>
<dbReference type="OMA" id="GIAKHFN"/>
<dbReference type="OrthoDB" id="9435504at2759"/>
<dbReference type="PhylomeDB" id="Q9JJW3"/>
<dbReference type="TreeFam" id="TF324671"/>
<dbReference type="Reactome" id="R-RNO-163210">
    <property type="pathway name" value="Formation of ATP by chemiosmotic coupling"/>
</dbReference>
<dbReference type="Reactome" id="R-RNO-8949613">
    <property type="pathway name" value="Cristae formation"/>
</dbReference>
<dbReference type="PRO" id="PR:Q9JJW3"/>
<dbReference type="Proteomes" id="UP000002494">
    <property type="component" value="Chromosome 1"/>
</dbReference>
<dbReference type="Proteomes" id="UP000002494">
    <property type="component" value="Chromosome 10"/>
</dbReference>
<dbReference type="Bgee" id="ENSRNOG00000020296">
    <property type="expression patterns" value="Expressed in lung and 8 other cell types or tissues"/>
</dbReference>
<dbReference type="GO" id="GO:0031966">
    <property type="term" value="C:mitochondrial membrane"/>
    <property type="evidence" value="ECO:0007669"/>
    <property type="project" value="UniProtKB-SubCell"/>
</dbReference>
<dbReference type="GO" id="GO:0005739">
    <property type="term" value="C:mitochondrion"/>
    <property type="evidence" value="ECO:0000266"/>
    <property type="project" value="RGD"/>
</dbReference>
<dbReference type="GO" id="GO:0045259">
    <property type="term" value="C:proton-transporting ATP synthase complex"/>
    <property type="evidence" value="ECO:0000314"/>
    <property type="project" value="UniProtKB"/>
</dbReference>
<dbReference type="InterPro" id="IPR009125">
    <property type="entry name" value="ATPMK"/>
</dbReference>
<dbReference type="PANTHER" id="PTHR34038">
    <property type="entry name" value="ATP SYNTHASE MEMBRANE SUBUNIT DAPIT, MITOCHONDRIAL"/>
    <property type="match status" value="1"/>
</dbReference>
<dbReference type="PANTHER" id="PTHR34038:SF1">
    <property type="entry name" value="ATP SYNTHASE MEMBRANE SUBUNIT K, MITOCHONDRIAL"/>
    <property type="match status" value="1"/>
</dbReference>
<dbReference type="Pfam" id="PF14960">
    <property type="entry name" value="ATP_synth_reg"/>
    <property type="match status" value="1"/>
</dbReference>
<dbReference type="PRINTS" id="PR01821">
    <property type="entry name" value="DAPIT"/>
</dbReference>
<keyword id="KW-0007">Acetylation</keyword>
<keyword id="KW-0472">Membrane</keyword>
<keyword id="KW-0496">Mitochondrion</keyword>
<keyword id="KW-1185">Reference proteome</keyword>
<keyword id="KW-0812">Transmembrane</keyword>
<keyword id="KW-1133">Transmembrane helix</keyword>
<proteinExistence type="evidence at protein level"/>
<reference key="1">
    <citation type="journal article" date="2001" name="Acta Diabetol.">
        <title>DAPIT, a novel protein down-regulated in insulin-sensitive tissues in streptozotocin-induced diabetes.</title>
        <authorList>
            <person name="Paivarinne H."/>
            <person name="Kainulainen H."/>
        </authorList>
    </citation>
    <scope>NUCLEOTIDE SEQUENCE [MRNA]</scope>
    <scope>TISSUE SPECIFICITY</scope>
    <source>
        <strain>Sprague-Dawley</strain>
        <tissue>Skeletal muscle</tissue>
    </source>
</reference>
<reference key="2">
    <citation type="journal article" date="2007" name="Mol. Cell. Proteomics">
        <title>Identification of two proteins associated with mammalian ATP synthase.</title>
        <authorList>
            <person name="Meyer B."/>
            <person name="Wittig I."/>
            <person name="Trifilieff E."/>
            <person name="Karas M."/>
            <person name="Schaegger H."/>
        </authorList>
    </citation>
    <scope>IDENTIFICATION BY MASS SPECTROMETRY</scope>
    <scope>IDENTIFICATION IN THE ATP SYNTHASE COMPLEX</scope>
</reference>
<sequence>MAGPESDGQFQFTGIKKYFNSYTLTGRMNCVLATYGGIALLVLYFKLRPKKTPAVKAT</sequence>
<evidence type="ECO:0000250" key="1">
    <source>
        <dbReference type="UniProtKB" id="P19483"/>
    </source>
</evidence>
<evidence type="ECO:0000250" key="2">
    <source>
        <dbReference type="UniProtKB" id="Q3ZBI7"/>
    </source>
</evidence>
<evidence type="ECO:0000250" key="3">
    <source>
        <dbReference type="UniProtKB" id="Q78IK2"/>
    </source>
</evidence>
<evidence type="ECO:0000250" key="4">
    <source>
        <dbReference type="UniProtKB" id="Q96IX5"/>
    </source>
</evidence>
<evidence type="ECO:0000255" key="5"/>
<evidence type="ECO:0000269" key="6">
    <source>
    </source>
</evidence>
<evidence type="ECO:0000305" key="7"/>
<evidence type="ECO:0000312" key="8">
    <source>
        <dbReference type="RGD" id="631426"/>
    </source>
</evidence>